<dbReference type="EMBL" id="CP000458">
    <property type="protein sequence ID" value="ABK07506.1"/>
    <property type="molecule type" value="Genomic_DNA"/>
</dbReference>
<dbReference type="RefSeq" id="WP_006476837.1">
    <property type="nucleotide sequence ID" value="NC_008542.1"/>
</dbReference>
<dbReference type="SMR" id="A0K4S9"/>
<dbReference type="GeneID" id="83047520"/>
<dbReference type="KEGG" id="bch:Bcen2424_0753"/>
<dbReference type="HOGENOM" id="CLU_017633_0_7_4"/>
<dbReference type="GO" id="GO:0005737">
    <property type="term" value="C:cytoplasm"/>
    <property type="evidence" value="ECO:0007669"/>
    <property type="project" value="UniProtKB-SubCell"/>
</dbReference>
<dbReference type="GO" id="GO:0005524">
    <property type="term" value="F:ATP binding"/>
    <property type="evidence" value="ECO:0007669"/>
    <property type="project" value="InterPro"/>
</dbReference>
<dbReference type="GO" id="GO:0031072">
    <property type="term" value="F:heat shock protein binding"/>
    <property type="evidence" value="ECO:0007669"/>
    <property type="project" value="InterPro"/>
</dbReference>
<dbReference type="GO" id="GO:0051082">
    <property type="term" value="F:unfolded protein binding"/>
    <property type="evidence" value="ECO:0007669"/>
    <property type="project" value="UniProtKB-UniRule"/>
</dbReference>
<dbReference type="GO" id="GO:0008270">
    <property type="term" value="F:zinc ion binding"/>
    <property type="evidence" value="ECO:0007669"/>
    <property type="project" value="UniProtKB-UniRule"/>
</dbReference>
<dbReference type="GO" id="GO:0051085">
    <property type="term" value="P:chaperone cofactor-dependent protein refolding"/>
    <property type="evidence" value="ECO:0007669"/>
    <property type="project" value="TreeGrafter"/>
</dbReference>
<dbReference type="GO" id="GO:0006260">
    <property type="term" value="P:DNA replication"/>
    <property type="evidence" value="ECO:0007669"/>
    <property type="project" value="UniProtKB-KW"/>
</dbReference>
<dbReference type="GO" id="GO:0042026">
    <property type="term" value="P:protein refolding"/>
    <property type="evidence" value="ECO:0007669"/>
    <property type="project" value="TreeGrafter"/>
</dbReference>
<dbReference type="GO" id="GO:0009408">
    <property type="term" value="P:response to heat"/>
    <property type="evidence" value="ECO:0007669"/>
    <property type="project" value="InterPro"/>
</dbReference>
<dbReference type="CDD" id="cd06257">
    <property type="entry name" value="DnaJ"/>
    <property type="match status" value="1"/>
</dbReference>
<dbReference type="CDD" id="cd10747">
    <property type="entry name" value="DnaJ_C"/>
    <property type="match status" value="1"/>
</dbReference>
<dbReference type="CDD" id="cd10719">
    <property type="entry name" value="DnaJ_zf"/>
    <property type="match status" value="1"/>
</dbReference>
<dbReference type="FunFam" id="1.10.287.110:FF:000031">
    <property type="entry name" value="Molecular chaperone DnaJ"/>
    <property type="match status" value="1"/>
</dbReference>
<dbReference type="FunFam" id="2.10.230.10:FF:000002">
    <property type="entry name" value="Molecular chaperone DnaJ"/>
    <property type="match status" value="1"/>
</dbReference>
<dbReference type="FunFam" id="2.60.260.20:FF:000004">
    <property type="entry name" value="Molecular chaperone DnaJ"/>
    <property type="match status" value="1"/>
</dbReference>
<dbReference type="Gene3D" id="1.10.287.110">
    <property type="entry name" value="DnaJ domain"/>
    <property type="match status" value="1"/>
</dbReference>
<dbReference type="Gene3D" id="2.10.230.10">
    <property type="entry name" value="Heat shock protein DnaJ, cysteine-rich domain"/>
    <property type="match status" value="1"/>
</dbReference>
<dbReference type="Gene3D" id="2.60.260.20">
    <property type="entry name" value="Urease metallochaperone UreE, N-terminal domain"/>
    <property type="match status" value="2"/>
</dbReference>
<dbReference type="HAMAP" id="MF_01152">
    <property type="entry name" value="DnaJ"/>
    <property type="match status" value="1"/>
</dbReference>
<dbReference type="InterPro" id="IPR012724">
    <property type="entry name" value="DnaJ"/>
</dbReference>
<dbReference type="InterPro" id="IPR002939">
    <property type="entry name" value="DnaJ_C"/>
</dbReference>
<dbReference type="InterPro" id="IPR001623">
    <property type="entry name" value="DnaJ_domain"/>
</dbReference>
<dbReference type="InterPro" id="IPR018253">
    <property type="entry name" value="DnaJ_domain_CS"/>
</dbReference>
<dbReference type="InterPro" id="IPR008971">
    <property type="entry name" value="HSP40/DnaJ_pept-bd"/>
</dbReference>
<dbReference type="InterPro" id="IPR001305">
    <property type="entry name" value="HSP_DnaJ_Cys-rich_dom"/>
</dbReference>
<dbReference type="InterPro" id="IPR036410">
    <property type="entry name" value="HSP_DnaJ_Cys-rich_dom_sf"/>
</dbReference>
<dbReference type="InterPro" id="IPR036869">
    <property type="entry name" value="J_dom_sf"/>
</dbReference>
<dbReference type="NCBIfam" id="TIGR02349">
    <property type="entry name" value="DnaJ_bact"/>
    <property type="match status" value="1"/>
</dbReference>
<dbReference type="NCBIfam" id="NF008035">
    <property type="entry name" value="PRK10767.1"/>
    <property type="match status" value="1"/>
</dbReference>
<dbReference type="PANTHER" id="PTHR43096:SF48">
    <property type="entry name" value="CHAPERONE PROTEIN DNAJ"/>
    <property type="match status" value="1"/>
</dbReference>
<dbReference type="PANTHER" id="PTHR43096">
    <property type="entry name" value="DNAJ HOMOLOG 1, MITOCHONDRIAL-RELATED"/>
    <property type="match status" value="1"/>
</dbReference>
<dbReference type="Pfam" id="PF00226">
    <property type="entry name" value="DnaJ"/>
    <property type="match status" value="1"/>
</dbReference>
<dbReference type="Pfam" id="PF01556">
    <property type="entry name" value="DnaJ_C"/>
    <property type="match status" value="1"/>
</dbReference>
<dbReference type="Pfam" id="PF00684">
    <property type="entry name" value="DnaJ_CXXCXGXG"/>
    <property type="match status" value="1"/>
</dbReference>
<dbReference type="PRINTS" id="PR00625">
    <property type="entry name" value="JDOMAIN"/>
</dbReference>
<dbReference type="SMART" id="SM00271">
    <property type="entry name" value="DnaJ"/>
    <property type="match status" value="1"/>
</dbReference>
<dbReference type="SUPFAM" id="SSF46565">
    <property type="entry name" value="Chaperone J-domain"/>
    <property type="match status" value="1"/>
</dbReference>
<dbReference type="SUPFAM" id="SSF57938">
    <property type="entry name" value="DnaJ/Hsp40 cysteine-rich domain"/>
    <property type="match status" value="1"/>
</dbReference>
<dbReference type="SUPFAM" id="SSF49493">
    <property type="entry name" value="HSP40/DnaJ peptide-binding domain"/>
    <property type="match status" value="2"/>
</dbReference>
<dbReference type="PROSITE" id="PS00636">
    <property type="entry name" value="DNAJ_1"/>
    <property type="match status" value="1"/>
</dbReference>
<dbReference type="PROSITE" id="PS50076">
    <property type="entry name" value="DNAJ_2"/>
    <property type="match status" value="1"/>
</dbReference>
<dbReference type="PROSITE" id="PS51188">
    <property type="entry name" value="ZF_CR"/>
    <property type="match status" value="1"/>
</dbReference>
<gene>
    <name evidence="1" type="primary">dnaJ</name>
    <name type="ordered locus">Bcen2424_0753</name>
</gene>
<keyword id="KW-0143">Chaperone</keyword>
<keyword id="KW-0963">Cytoplasm</keyword>
<keyword id="KW-0235">DNA replication</keyword>
<keyword id="KW-0479">Metal-binding</keyword>
<keyword id="KW-0677">Repeat</keyword>
<keyword id="KW-0346">Stress response</keyword>
<keyword id="KW-0862">Zinc</keyword>
<keyword id="KW-0863">Zinc-finger</keyword>
<proteinExistence type="inferred from homology"/>
<protein>
    <recommendedName>
        <fullName evidence="1">Chaperone protein DnaJ</fullName>
    </recommendedName>
</protein>
<feature type="chain" id="PRO_1000085155" description="Chaperone protein DnaJ">
    <location>
        <begin position="1"/>
        <end position="378"/>
    </location>
</feature>
<feature type="domain" description="J" evidence="1">
    <location>
        <begin position="5"/>
        <end position="70"/>
    </location>
</feature>
<feature type="repeat" description="CXXCXGXG motif">
    <location>
        <begin position="151"/>
        <end position="158"/>
    </location>
</feature>
<feature type="repeat" description="CXXCXGXG motif">
    <location>
        <begin position="168"/>
        <end position="175"/>
    </location>
</feature>
<feature type="repeat" description="CXXCXGXG motif">
    <location>
        <begin position="190"/>
        <end position="197"/>
    </location>
</feature>
<feature type="repeat" description="CXXCXGXG motif">
    <location>
        <begin position="204"/>
        <end position="211"/>
    </location>
</feature>
<feature type="zinc finger region" description="CR-type" evidence="1">
    <location>
        <begin position="138"/>
        <end position="216"/>
    </location>
</feature>
<feature type="binding site" evidence="1">
    <location>
        <position position="151"/>
    </location>
    <ligand>
        <name>Zn(2+)</name>
        <dbReference type="ChEBI" id="CHEBI:29105"/>
        <label>1</label>
    </ligand>
</feature>
<feature type="binding site" evidence="1">
    <location>
        <position position="154"/>
    </location>
    <ligand>
        <name>Zn(2+)</name>
        <dbReference type="ChEBI" id="CHEBI:29105"/>
        <label>1</label>
    </ligand>
</feature>
<feature type="binding site" evidence="1">
    <location>
        <position position="168"/>
    </location>
    <ligand>
        <name>Zn(2+)</name>
        <dbReference type="ChEBI" id="CHEBI:29105"/>
        <label>2</label>
    </ligand>
</feature>
<feature type="binding site" evidence="1">
    <location>
        <position position="171"/>
    </location>
    <ligand>
        <name>Zn(2+)</name>
        <dbReference type="ChEBI" id="CHEBI:29105"/>
        <label>2</label>
    </ligand>
</feature>
<feature type="binding site" evidence="1">
    <location>
        <position position="190"/>
    </location>
    <ligand>
        <name>Zn(2+)</name>
        <dbReference type="ChEBI" id="CHEBI:29105"/>
        <label>2</label>
    </ligand>
</feature>
<feature type="binding site" evidence="1">
    <location>
        <position position="193"/>
    </location>
    <ligand>
        <name>Zn(2+)</name>
        <dbReference type="ChEBI" id="CHEBI:29105"/>
        <label>2</label>
    </ligand>
</feature>
<feature type="binding site" evidence="1">
    <location>
        <position position="204"/>
    </location>
    <ligand>
        <name>Zn(2+)</name>
        <dbReference type="ChEBI" id="CHEBI:29105"/>
        <label>1</label>
    </ligand>
</feature>
<feature type="binding site" evidence="1">
    <location>
        <position position="207"/>
    </location>
    <ligand>
        <name>Zn(2+)</name>
        <dbReference type="ChEBI" id="CHEBI:29105"/>
        <label>1</label>
    </ligand>
</feature>
<evidence type="ECO:0000255" key="1">
    <source>
        <dbReference type="HAMAP-Rule" id="MF_01152"/>
    </source>
</evidence>
<comment type="function">
    <text evidence="1">Participates actively in the response to hyperosmotic and heat shock by preventing the aggregation of stress-denatured proteins and by disaggregating proteins, also in an autonomous, DnaK-independent fashion. Unfolded proteins bind initially to DnaJ; upon interaction with the DnaJ-bound protein, DnaK hydrolyzes its bound ATP, resulting in the formation of a stable complex. GrpE releases ADP from DnaK; ATP binding to DnaK triggers the release of the substrate protein, thus completing the reaction cycle. Several rounds of ATP-dependent interactions between DnaJ, DnaK and GrpE are required for fully efficient folding. Also involved, together with DnaK and GrpE, in the DNA replication of plasmids through activation of initiation proteins.</text>
</comment>
<comment type="cofactor">
    <cofactor evidence="1">
        <name>Zn(2+)</name>
        <dbReference type="ChEBI" id="CHEBI:29105"/>
    </cofactor>
    <text evidence="1">Binds 2 Zn(2+) ions per monomer.</text>
</comment>
<comment type="subunit">
    <text evidence="1">Homodimer.</text>
</comment>
<comment type="subcellular location">
    <subcellularLocation>
        <location evidence="1">Cytoplasm</location>
    </subcellularLocation>
</comment>
<comment type="domain">
    <text evidence="1">The J domain is necessary and sufficient to stimulate DnaK ATPase activity. Zinc center 1 plays an important role in the autonomous, DnaK-independent chaperone activity of DnaJ. Zinc center 2 is essential for interaction with DnaK and for DnaJ activity.</text>
</comment>
<comment type="similarity">
    <text evidence="1">Belongs to the DnaJ family.</text>
</comment>
<name>DNAJ_BURCH</name>
<accession>A0K4S9</accession>
<organism>
    <name type="scientific">Burkholderia cenocepacia (strain HI2424)</name>
    <dbReference type="NCBI Taxonomy" id="331272"/>
    <lineage>
        <taxon>Bacteria</taxon>
        <taxon>Pseudomonadati</taxon>
        <taxon>Pseudomonadota</taxon>
        <taxon>Betaproteobacteria</taxon>
        <taxon>Burkholderiales</taxon>
        <taxon>Burkholderiaceae</taxon>
        <taxon>Burkholderia</taxon>
        <taxon>Burkholderia cepacia complex</taxon>
    </lineage>
</organism>
<sequence length="378" mass="40827">MAKRDYYEVLGVAKNASDDEIKKAYRKLAMKYHPDRNPDSKDAEEHFKEAKEAYEMLSDGQKRAAYDQYGHAGVDPNMGGAGAQGFGGFADAFGDIFGDIFGQAAGGAARGGRGGPQVYRGADLRYSMEITLEQAAHGYDTQIRVPSWVSCEVCHGSGAKPGTKPETCPTCHGQGTVRMSQGFFSIQQTCPKCHGTGTYIPEPCAHCHGSGKVKETKTLEVKIPAGIDDGMRIRSAGNGEPGINGGPPGDLYVEIHIKPHSVFERDGDDLHCQMPIPFTTAALGGEIEVPTLAGRASFPVPEGTQSGKTFRLRGKGIKGLRSSIAGDLYVHVQVETPVKLTDQQRDLLKQFEKSLAEGGARHSPQSKSWFDRVKSFFE</sequence>
<reference key="1">
    <citation type="submission" date="2006-08" db="EMBL/GenBank/DDBJ databases">
        <title>Complete sequence of chromosome 1 of Burkholderia cenocepacia HI2424.</title>
        <authorList>
            <person name="Copeland A."/>
            <person name="Lucas S."/>
            <person name="Lapidus A."/>
            <person name="Barry K."/>
            <person name="Detter J.C."/>
            <person name="Glavina del Rio T."/>
            <person name="Hammon N."/>
            <person name="Israni S."/>
            <person name="Pitluck S."/>
            <person name="Chain P."/>
            <person name="Malfatti S."/>
            <person name="Shin M."/>
            <person name="Vergez L."/>
            <person name="Schmutz J."/>
            <person name="Larimer F."/>
            <person name="Land M."/>
            <person name="Hauser L."/>
            <person name="Kyrpides N."/>
            <person name="Kim E."/>
            <person name="LiPuma J.J."/>
            <person name="Gonzalez C.F."/>
            <person name="Konstantinidis K."/>
            <person name="Tiedje J.M."/>
            <person name="Richardson P."/>
        </authorList>
    </citation>
    <scope>NUCLEOTIDE SEQUENCE [LARGE SCALE GENOMIC DNA]</scope>
    <source>
        <strain>HI2424</strain>
    </source>
</reference>